<accession>A9R7V0</accession>
<protein>
    <recommendedName>
        <fullName evidence="1">Erythronate-4-phosphate dehydrogenase</fullName>
        <ecNumber evidence="1">1.1.1.290</ecNumber>
    </recommendedName>
</protein>
<sequence length="375" mass="41167">MKILVDENMPYAEELFRRLGDVQAVPGRPIPRDALVDADALMVRSVTKVNEALLHGTSIGFVGTATAGTDHVDDTWLRQQGIGFSAAPGCNAIAVVEYVFSALMMMAERDGFQLRDKTVGIIGVGNVGSRLNARLQALGVRTLLCDPPRADRGDNEAFWPLEKLVREADVLTFHTPLNKTGAYQSLHMADDELLAALPDGRILINACRGAVVDNAALLRALEKGKKLSVVLDVWEPEPDLSLPLLARVDIGTPHIAGYTLEGKARGTTQVFEAFSQHLGQPQSVELASLLPVPEFSHLRLNGELDEGKLKRLMHLVYDVRRDDAPLRHVAGLPGEFDRLRKHYQERREWSSLCVQCDDATSAGLLQQLGFTTQLL</sequence>
<dbReference type="EC" id="1.1.1.290" evidence="1"/>
<dbReference type="EMBL" id="CP000901">
    <property type="protein sequence ID" value="ABX85406.1"/>
    <property type="molecule type" value="Genomic_DNA"/>
</dbReference>
<dbReference type="RefSeq" id="WP_002209725.1">
    <property type="nucleotide sequence ID" value="NZ_CP009935.1"/>
</dbReference>
<dbReference type="SMR" id="A9R7V0"/>
<dbReference type="GeneID" id="57975926"/>
<dbReference type="KEGG" id="ypg:YpAngola_A0364"/>
<dbReference type="PATRIC" id="fig|349746.12.peg.1313"/>
<dbReference type="UniPathway" id="UPA00244">
    <property type="reaction ID" value="UER00310"/>
</dbReference>
<dbReference type="GO" id="GO:0005829">
    <property type="term" value="C:cytosol"/>
    <property type="evidence" value="ECO:0007669"/>
    <property type="project" value="TreeGrafter"/>
</dbReference>
<dbReference type="GO" id="GO:0033711">
    <property type="term" value="F:4-phosphoerythronate dehydrogenase activity"/>
    <property type="evidence" value="ECO:0007669"/>
    <property type="project" value="UniProtKB-EC"/>
</dbReference>
<dbReference type="GO" id="GO:0051287">
    <property type="term" value="F:NAD binding"/>
    <property type="evidence" value="ECO:0007669"/>
    <property type="project" value="InterPro"/>
</dbReference>
<dbReference type="GO" id="GO:0046983">
    <property type="term" value="F:protein dimerization activity"/>
    <property type="evidence" value="ECO:0007669"/>
    <property type="project" value="InterPro"/>
</dbReference>
<dbReference type="GO" id="GO:0036001">
    <property type="term" value="P:'de novo' pyridoxal 5'-phosphate biosynthetic process"/>
    <property type="evidence" value="ECO:0007669"/>
    <property type="project" value="TreeGrafter"/>
</dbReference>
<dbReference type="GO" id="GO:0008615">
    <property type="term" value="P:pyridoxine biosynthetic process"/>
    <property type="evidence" value="ECO:0007669"/>
    <property type="project" value="UniProtKB-UniRule"/>
</dbReference>
<dbReference type="CDD" id="cd12158">
    <property type="entry name" value="ErythrP_dh"/>
    <property type="match status" value="1"/>
</dbReference>
<dbReference type="FunFam" id="3.30.1370.170:FF:000001">
    <property type="entry name" value="Erythronate-4-phosphate dehydrogenase"/>
    <property type="match status" value="1"/>
</dbReference>
<dbReference type="FunFam" id="3.40.50.720:FF:000093">
    <property type="entry name" value="Erythronate-4-phosphate dehydrogenase"/>
    <property type="match status" value="1"/>
</dbReference>
<dbReference type="Gene3D" id="3.30.1370.170">
    <property type="match status" value="1"/>
</dbReference>
<dbReference type="Gene3D" id="3.40.50.720">
    <property type="entry name" value="NAD(P)-binding Rossmann-like Domain"/>
    <property type="match status" value="2"/>
</dbReference>
<dbReference type="HAMAP" id="MF_01825">
    <property type="entry name" value="PdxB"/>
    <property type="match status" value="1"/>
</dbReference>
<dbReference type="InterPro" id="IPR006139">
    <property type="entry name" value="D-isomer_2_OHA_DH_cat_dom"/>
</dbReference>
<dbReference type="InterPro" id="IPR029753">
    <property type="entry name" value="D-isomer_DH_CS"/>
</dbReference>
<dbReference type="InterPro" id="IPR029752">
    <property type="entry name" value="D-isomer_DH_CS1"/>
</dbReference>
<dbReference type="InterPro" id="IPR006140">
    <property type="entry name" value="D-isomer_DH_NAD-bd"/>
</dbReference>
<dbReference type="InterPro" id="IPR020921">
    <property type="entry name" value="Erythronate-4-P_DHase"/>
</dbReference>
<dbReference type="InterPro" id="IPR024531">
    <property type="entry name" value="Erythronate-4-P_DHase_dimer"/>
</dbReference>
<dbReference type="InterPro" id="IPR036291">
    <property type="entry name" value="NAD(P)-bd_dom_sf"/>
</dbReference>
<dbReference type="InterPro" id="IPR038251">
    <property type="entry name" value="PdxB_dimer_sf"/>
</dbReference>
<dbReference type="NCBIfam" id="NF001309">
    <property type="entry name" value="PRK00257.1"/>
    <property type="match status" value="1"/>
</dbReference>
<dbReference type="PANTHER" id="PTHR42938">
    <property type="entry name" value="FORMATE DEHYDROGENASE 1"/>
    <property type="match status" value="1"/>
</dbReference>
<dbReference type="PANTHER" id="PTHR42938:SF9">
    <property type="entry name" value="FORMATE DEHYDROGENASE 1"/>
    <property type="match status" value="1"/>
</dbReference>
<dbReference type="Pfam" id="PF00389">
    <property type="entry name" value="2-Hacid_dh"/>
    <property type="match status" value="1"/>
</dbReference>
<dbReference type="Pfam" id="PF02826">
    <property type="entry name" value="2-Hacid_dh_C"/>
    <property type="match status" value="1"/>
</dbReference>
<dbReference type="Pfam" id="PF11890">
    <property type="entry name" value="DUF3410"/>
    <property type="match status" value="1"/>
</dbReference>
<dbReference type="SUPFAM" id="SSF52283">
    <property type="entry name" value="Formate/glycerate dehydrogenase catalytic domain-like"/>
    <property type="match status" value="1"/>
</dbReference>
<dbReference type="SUPFAM" id="SSF51735">
    <property type="entry name" value="NAD(P)-binding Rossmann-fold domains"/>
    <property type="match status" value="1"/>
</dbReference>
<dbReference type="PROSITE" id="PS00065">
    <property type="entry name" value="D_2_HYDROXYACID_DH_1"/>
    <property type="match status" value="1"/>
</dbReference>
<dbReference type="PROSITE" id="PS00671">
    <property type="entry name" value="D_2_HYDROXYACID_DH_3"/>
    <property type="match status" value="1"/>
</dbReference>
<comment type="function">
    <text evidence="1">Catalyzes the oxidation of erythronate-4-phosphate to 3-hydroxy-2-oxo-4-phosphonooxybutanoate.</text>
</comment>
<comment type="catalytic activity">
    <reaction evidence="1">
        <text>4-phospho-D-erythronate + NAD(+) = (R)-3-hydroxy-2-oxo-4-phosphooxybutanoate + NADH + H(+)</text>
        <dbReference type="Rhea" id="RHEA:18829"/>
        <dbReference type="ChEBI" id="CHEBI:15378"/>
        <dbReference type="ChEBI" id="CHEBI:57540"/>
        <dbReference type="ChEBI" id="CHEBI:57945"/>
        <dbReference type="ChEBI" id="CHEBI:58538"/>
        <dbReference type="ChEBI" id="CHEBI:58766"/>
        <dbReference type="EC" id="1.1.1.290"/>
    </reaction>
</comment>
<comment type="pathway">
    <text evidence="1">Cofactor biosynthesis; pyridoxine 5'-phosphate biosynthesis; pyridoxine 5'-phosphate from D-erythrose 4-phosphate: step 2/5.</text>
</comment>
<comment type="subunit">
    <text evidence="1">Homodimer.</text>
</comment>
<comment type="subcellular location">
    <subcellularLocation>
        <location evidence="1">Cytoplasm</location>
    </subcellularLocation>
</comment>
<comment type="similarity">
    <text evidence="1">Belongs to the D-isomer specific 2-hydroxyacid dehydrogenase family. PdxB subfamily.</text>
</comment>
<evidence type="ECO:0000255" key="1">
    <source>
        <dbReference type="HAMAP-Rule" id="MF_01825"/>
    </source>
</evidence>
<name>PDXB_YERPG</name>
<gene>
    <name evidence="1" type="primary">pdxB</name>
    <name type="ordered locus">YpAngola_A0364</name>
</gene>
<feature type="chain" id="PRO_1000188289" description="Erythronate-4-phosphate dehydrogenase">
    <location>
        <begin position="1"/>
        <end position="375"/>
    </location>
</feature>
<feature type="active site" evidence="1">
    <location>
        <position position="208"/>
    </location>
</feature>
<feature type="active site" evidence="1">
    <location>
        <position position="237"/>
    </location>
</feature>
<feature type="active site" description="Proton donor" evidence="1">
    <location>
        <position position="254"/>
    </location>
</feature>
<feature type="binding site" evidence="1">
    <location>
        <position position="45"/>
    </location>
    <ligand>
        <name>substrate</name>
    </ligand>
</feature>
<feature type="binding site" evidence="1">
    <location>
        <position position="66"/>
    </location>
    <ligand>
        <name>substrate</name>
    </ligand>
</feature>
<feature type="binding site" evidence="1">
    <location>
        <position position="146"/>
    </location>
    <ligand>
        <name>NAD(+)</name>
        <dbReference type="ChEBI" id="CHEBI:57540"/>
    </ligand>
</feature>
<feature type="binding site" evidence="1">
    <location>
        <position position="175"/>
    </location>
    <ligand>
        <name>NAD(+)</name>
        <dbReference type="ChEBI" id="CHEBI:57540"/>
    </ligand>
</feature>
<feature type="binding site" evidence="1">
    <location>
        <position position="232"/>
    </location>
    <ligand>
        <name>NAD(+)</name>
        <dbReference type="ChEBI" id="CHEBI:57540"/>
    </ligand>
</feature>
<feature type="binding site" evidence="1">
    <location>
        <position position="257"/>
    </location>
    <ligand>
        <name>NAD(+)</name>
        <dbReference type="ChEBI" id="CHEBI:57540"/>
    </ligand>
</feature>
<feature type="binding site" evidence="1">
    <location>
        <position position="258"/>
    </location>
    <ligand>
        <name>substrate</name>
    </ligand>
</feature>
<reference key="1">
    <citation type="journal article" date="2010" name="J. Bacteriol.">
        <title>Genome sequence of the deep-rooted Yersinia pestis strain Angola reveals new insights into the evolution and pangenome of the plague bacterium.</title>
        <authorList>
            <person name="Eppinger M."/>
            <person name="Worsham P.L."/>
            <person name="Nikolich M.P."/>
            <person name="Riley D.R."/>
            <person name="Sebastian Y."/>
            <person name="Mou S."/>
            <person name="Achtman M."/>
            <person name="Lindler L.E."/>
            <person name="Ravel J."/>
        </authorList>
    </citation>
    <scope>NUCLEOTIDE SEQUENCE [LARGE SCALE GENOMIC DNA]</scope>
    <source>
        <strain>Angola</strain>
    </source>
</reference>
<organism>
    <name type="scientific">Yersinia pestis bv. Antiqua (strain Angola)</name>
    <dbReference type="NCBI Taxonomy" id="349746"/>
    <lineage>
        <taxon>Bacteria</taxon>
        <taxon>Pseudomonadati</taxon>
        <taxon>Pseudomonadota</taxon>
        <taxon>Gammaproteobacteria</taxon>
        <taxon>Enterobacterales</taxon>
        <taxon>Yersiniaceae</taxon>
        <taxon>Yersinia</taxon>
    </lineage>
</organism>
<keyword id="KW-0963">Cytoplasm</keyword>
<keyword id="KW-0520">NAD</keyword>
<keyword id="KW-0560">Oxidoreductase</keyword>
<keyword id="KW-0664">Pyridoxine biosynthesis</keyword>
<proteinExistence type="inferred from homology"/>